<evidence type="ECO:0000250" key="1"/>
<evidence type="ECO:0000255" key="2">
    <source>
        <dbReference type="PROSITE-ProRule" id="PRU01163"/>
    </source>
</evidence>
<evidence type="ECO:0000305" key="3"/>
<accession>P46235</accession>
<dbReference type="EC" id="4.4.1.5"/>
<dbReference type="EMBL" id="BA000031">
    <property type="protein sequence ID" value="BAC60372.1"/>
    <property type="molecule type" value="Genomic_DNA"/>
</dbReference>
<dbReference type="EMBL" id="U06949">
    <property type="protein sequence ID" value="AAA21576.1"/>
    <property type="molecule type" value="Genomic_DNA"/>
</dbReference>
<dbReference type="RefSeq" id="NP_798488.1">
    <property type="nucleotide sequence ID" value="NC_004603.1"/>
</dbReference>
<dbReference type="RefSeq" id="WP_005480812.1">
    <property type="nucleotide sequence ID" value="NC_004603.1"/>
</dbReference>
<dbReference type="SMR" id="P46235"/>
<dbReference type="GeneID" id="1189621"/>
<dbReference type="KEGG" id="vpa:VP2109"/>
<dbReference type="PATRIC" id="fig|223926.6.peg.2019"/>
<dbReference type="eggNOG" id="COG0346">
    <property type="taxonomic scope" value="Bacteria"/>
</dbReference>
<dbReference type="HOGENOM" id="CLU_046006_8_1_6"/>
<dbReference type="UniPathway" id="UPA00619">
    <property type="reaction ID" value="UER00675"/>
</dbReference>
<dbReference type="Proteomes" id="UP000002493">
    <property type="component" value="Chromosome 1"/>
</dbReference>
<dbReference type="GO" id="GO:0005737">
    <property type="term" value="C:cytoplasm"/>
    <property type="evidence" value="ECO:0007669"/>
    <property type="project" value="TreeGrafter"/>
</dbReference>
<dbReference type="GO" id="GO:0004462">
    <property type="term" value="F:lactoylglutathione lyase activity"/>
    <property type="evidence" value="ECO:0007669"/>
    <property type="project" value="UniProtKB-EC"/>
</dbReference>
<dbReference type="GO" id="GO:0046872">
    <property type="term" value="F:metal ion binding"/>
    <property type="evidence" value="ECO:0007669"/>
    <property type="project" value="UniProtKB-KW"/>
</dbReference>
<dbReference type="GO" id="GO:0019243">
    <property type="term" value="P:methylglyoxal catabolic process to D-lactate via S-lactoyl-glutathione"/>
    <property type="evidence" value="ECO:0007669"/>
    <property type="project" value="TreeGrafter"/>
</dbReference>
<dbReference type="CDD" id="cd16358">
    <property type="entry name" value="GlxI_Ni"/>
    <property type="match status" value="1"/>
</dbReference>
<dbReference type="Gene3D" id="3.10.180.10">
    <property type="entry name" value="2,3-Dihydroxybiphenyl 1,2-Dioxygenase, domain 1"/>
    <property type="match status" value="1"/>
</dbReference>
<dbReference type="InterPro" id="IPR029068">
    <property type="entry name" value="Glyas_Bleomycin-R_OHBP_Dase"/>
</dbReference>
<dbReference type="InterPro" id="IPR004360">
    <property type="entry name" value="Glyas_Fos-R_dOase_dom"/>
</dbReference>
<dbReference type="InterPro" id="IPR004361">
    <property type="entry name" value="Glyoxalase_1"/>
</dbReference>
<dbReference type="InterPro" id="IPR018146">
    <property type="entry name" value="Glyoxalase_1_CS"/>
</dbReference>
<dbReference type="InterPro" id="IPR037523">
    <property type="entry name" value="VOC"/>
</dbReference>
<dbReference type="NCBIfam" id="TIGR00068">
    <property type="entry name" value="glyox_I"/>
    <property type="match status" value="1"/>
</dbReference>
<dbReference type="PANTHER" id="PTHR46036">
    <property type="entry name" value="LACTOYLGLUTATHIONE LYASE"/>
    <property type="match status" value="1"/>
</dbReference>
<dbReference type="PANTHER" id="PTHR46036:SF5">
    <property type="entry name" value="LACTOYLGLUTATHIONE LYASE"/>
    <property type="match status" value="1"/>
</dbReference>
<dbReference type="Pfam" id="PF00903">
    <property type="entry name" value="Glyoxalase"/>
    <property type="match status" value="1"/>
</dbReference>
<dbReference type="SUPFAM" id="SSF54593">
    <property type="entry name" value="Glyoxalase/Bleomycin resistance protein/Dihydroxybiphenyl dioxygenase"/>
    <property type="match status" value="1"/>
</dbReference>
<dbReference type="PROSITE" id="PS00934">
    <property type="entry name" value="GLYOXALASE_I_1"/>
    <property type="match status" value="1"/>
</dbReference>
<dbReference type="PROSITE" id="PS00935">
    <property type="entry name" value="GLYOXALASE_I_2"/>
    <property type="match status" value="1"/>
</dbReference>
<dbReference type="PROSITE" id="PS51819">
    <property type="entry name" value="VOC"/>
    <property type="match status" value="1"/>
</dbReference>
<reference key="1">
    <citation type="journal article" date="2003" name="Lancet">
        <title>Genome sequence of Vibrio parahaemolyticus: a pathogenic mechanism distinct from that of V. cholerae.</title>
        <authorList>
            <person name="Makino K."/>
            <person name="Oshima K."/>
            <person name="Kurokawa K."/>
            <person name="Yokoyama K."/>
            <person name="Uda T."/>
            <person name="Tagomori K."/>
            <person name="Iijima Y."/>
            <person name="Najima M."/>
            <person name="Nakano M."/>
            <person name="Yamashita A."/>
            <person name="Kubota Y."/>
            <person name="Kimura S."/>
            <person name="Yasunaga T."/>
            <person name="Honda T."/>
            <person name="Shinagawa H."/>
            <person name="Hattori M."/>
            <person name="Iida T."/>
        </authorList>
    </citation>
    <scope>NUCLEOTIDE SEQUENCE [LARGE SCALE GENOMIC DNA]</scope>
    <source>
        <strain>RIMD 2210633</strain>
    </source>
</reference>
<reference key="2">
    <citation type="journal article" date="1994" name="J. Bacteriol.">
        <title>MotY, a component of the sodium-type flagellar motor.</title>
        <authorList>
            <person name="McCarter L.L."/>
        </authorList>
    </citation>
    <scope>NUCLEOTIDE SEQUENCE [GENOMIC DNA] OF 6-138</scope>
    <source>
        <strain>BB22</strain>
    </source>
</reference>
<keyword id="KW-0456">Lyase</keyword>
<keyword id="KW-0479">Metal-binding</keyword>
<keyword id="KW-0533">Nickel</keyword>
<sequence length="138" mass="15034">MSNGRILHTMLRVGDLDKSIKFYTEVMGMQLLRTNENKEYEYTLAFVGYGDESQGAVIELTYNWGKTEYDLGTAFGHIAIGVDDIYATCDAIKAAGGNVTREAGPVKGGTTHIAFVKDPDGYMIELIQNKQASAGLEG</sequence>
<proteinExistence type="inferred from homology"/>
<feature type="chain" id="PRO_0000168098" description="Probable lactoylglutathione lyase">
    <location>
        <begin position="1"/>
        <end position="138"/>
    </location>
</feature>
<feature type="domain" description="VOC" evidence="2">
    <location>
        <begin position="5"/>
        <end position="129"/>
    </location>
</feature>
<feature type="active site" description="Proton donor/acceptor" evidence="1">
    <location>
        <position position="125"/>
    </location>
</feature>
<feature type="binding site" evidence="1">
    <location>
        <position position="8"/>
    </location>
    <ligand>
        <name>Ni(2+)</name>
        <dbReference type="ChEBI" id="CHEBI:49786"/>
    </ligand>
</feature>
<feature type="binding site" evidence="1">
    <location>
        <position position="12"/>
    </location>
    <ligand>
        <name>substrate</name>
    </ligand>
</feature>
<feature type="binding site" evidence="1">
    <location>
        <position position="59"/>
    </location>
    <ligand>
        <name>Ni(2+)</name>
        <dbReference type="ChEBI" id="CHEBI:49786"/>
    </ligand>
</feature>
<feature type="binding site" evidence="1">
    <location>
        <position position="63"/>
    </location>
    <ligand>
        <name>substrate</name>
    </ligand>
</feature>
<feature type="binding site" evidence="1">
    <location>
        <position position="77"/>
    </location>
    <ligand>
        <name>Ni(2+)</name>
        <dbReference type="ChEBI" id="CHEBI:49786"/>
    </ligand>
</feature>
<feature type="binding site" evidence="1">
    <location>
        <position position="77"/>
    </location>
    <ligand>
        <name>substrate</name>
    </ligand>
</feature>
<feature type="binding site" evidence="1">
    <location>
        <position position="125"/>
    </location>
    <ligand>
        <name>Ni(2+)</name>
        <dbReference type="ChEBI" id="CHEBI:49786"/>
    </ligand>
</feature>
<organism>
    <name type="scientific">Vibrio parahaemolyticus serotype O3:K6 (strain RIMD 2210633)</name>
    <dbReference type="NCBI Taxonomy" id="223926"/>
    <lineage>
        <taxon>Bacteria</taxon>
        <taxon>Pseudomonadati</taxon>
        <taxon>Pseudomonadota</taxon>
        <taxon>Gammaproteobacteria</taxon>
        <taxon>Vibrionales</taxon>
        <taxon>Vibrionaceae</taxon>
        <taxon>Vibrio</taxon>
    </lineage>
</organism>
<protein>
    <recommendedName>
        <fullName>Probable lactoylglutathione lyase</fullName>
        <ecNumber>4.4.1.5</ecNumber>
    </recommendedName>
    <alternativeName>
        <fullName>Aldoketomutase</fullName>
    </alternativeName>
    <alternativeName>
        <fullName>Glyoxalase I</fullName>
        <shortName>Glx I</shortName>
    </alternativeName>
    <alternativeName>
        <fullName>Ketone-aldehyde mutase</fullName>
    </alternativeName>
    <alternativeName>
        <fullName>Methylglyoxalase</fullName>
    </alternativeName>
    <alternativeName>
        <fullName>S-D-lactoylglutathione methylglyoxal lyase</fullName>
    </alternativeName>
</protein>
<name>LGUL_VIBPA</name>
<gene>
    <name type="primary">gloA</name>
    <name type="ordered locus">VP2109</name>
</gene>
<comment type="function">
    <text evidence="1">Catalyzes the conversion of hemimercaptal, formed from methylglyoxal and glutathione, to S-lactoylglutathione.</text>
</comment>
<comment type="catalytic activity">
    <reaction>
        <text>(R)-S-lactoylglutathione = methylglyoxal + glutathione</text>
        <dbReference type="Rhea" id="RHEA:19069"/>
        <dbReference type="ChEBI" id="CHEBI:17158"/>
        <dbReference type="ChEBI" id="CHEBI:57474"/>
        <dbReference type="ChEBI" id="CHEBI:57925"/>
        <dbReference type="EC" id="4.4.1.5"/>
    </reaction>
</comment>
<comment type="cofactor">
    <cofactor evidence="1">
        <name>Ni(2+)</name>
        <dbReference type="ChEBI" id="CHEBI:49786"/>
    </cofactor>
    <text evidence="1">Binds 1 nickel ion per subunit.</text>
</comment>
<comment type="pathway">
    <text>Secondary metabolite metabolism; methylglyoxal degradation; (R)-lactate from methylglyoxal: step 1/2.</text>
</comment>
<comment type="similarity">
    <text evidence="3">Belongs to the glyoxalase I family.</text>
</comment>